<organism>
    <name type="scientific">Bovine coronavirus (strain LY-138)</name>
    <name type="common">BCoV</name>
    <name type="synonym">BCV</name>
    <dbReference type="NCBI Taxonomy" id="11131"/>
    <lineage>
        <taxon>Viruses</taxon>
        <taxon>Riboviria</taxon>
        <taxon>Orthornavirae</taxon>
        <taxon>Pisuviricota</taxon>
        <taxon>Pisoniviricetes</taxon>
        <taxon>Nidovirales</taxon>
        <taxon>Cornidovirineae</taxon>
        <taxon>Coronaviridae</taxon>
        <taxon>Orthocoronavirinae</taxon>
        <taxon>Betacoronavirus</taxon>
        <taxon>Embecovirus</taxon>
        <taxon>Betacoronavirus 1</taxon>
    </lineage>
</organism>
<organismHost>
    <name type="scientific">Bos taurus</name>
    <name type="common">Bovine</name>
    <dbReference type="NCBI Taxonomy" id="9913"/>
</organismHost>
<feature type="chain" id="PRO_0000284096" description="Protein I">
    <location>
        <begin position="1"/>
        <end position="207"/>
    </location>
</feature>
<proteinExistence type="inferred from homology"/>
<keyword id="KW-0946">Virion</keyword>
<evidence type="ECO:0000250" key="1"/>
<evidence type="ECO:0000305" key="2"/>
<sequence>MASLSGPISPTNLEMFKPGVEELNPSKLLLLSNHQEGMLYPTILGSLELLSFKRERSLNLQRDKVCLLHQESQLLKLRGTGTDTTDVLLKQPMATSVNCCHDGIFTIWEQDRMPKTSMAPTLTESSGSLVTRLMSIPRLTFSIGTQVAMRLFRLGFRLARYSLRVTILKAQEGLLLIPDLLHAHPVEPLVQDRVVEPILATEPLPLV</sequence>
<gene>
    <name type="primary">N</name>
    <name type="synonym">I</name>
    <name type="ORF">7b</name>
</gene>
<reference key="1">
    <citation type="journal article" date="1998" name="Virus Genes">
        <title>Nucleotide and predicted amino acid sequences of all genes encoded by the 3' genomic portion (9.5 kb) of respiratory bovine coronaviruses and comparisons among respiratory and enteric coronaviruses.</title>
        <authorList>
            <person name="Chouljenko V.N."/>
            <person name="Kousoulas K.G."/>
            <person name="Lin X.Q."/>
            <person name="Storz J."/>
        </authorList>
    </citation>
    <scope>NUCLEOTIDE SEQUENCE [GENOMIC RNA]</scope>
</reference>
<name>IORF_CVBLY</name>
<accession>Q9QAR7</accession>
<protein>
    <recommendedName>
        <fullName>Protein I</fullName>
    </recommendedName>
    <alternativeName>
        <fullName>Accessory protein N2</fullName>
    </alternativeName>
    <alternativeName>
        <fullName>N internal ORF protein</fullName>
        <shortName>IORF</shortName>
    </alternativeName>
    <alternativeName>
        <fullName>Protein in nucleocapsid ORF</fullName>
    </alternativeName>
</protein>
<comment type="function">
    <text evidence="1">Structural protein that is not essential for the viral replication either in tissue culture or in its natural host.</text>
</comment>
<comment type="subcellular location">
    <subcellularLocation>
        <location evidence="1">Virion</location>
    </subcellularLocation>
</comment>
<comment type="miscellaneous">
    <text>The gene encoding this protein is included within the N gene (alternative ORF).</text>
</comment>
<comment type="similarity">
    <text evidence="2">Belongs to the coronavirus I protein family.</text>
</comment>
<dbReference type="EMBL" id="AF058942">
    <property type="protein sequence ID" value="AAF25506.1"/>
    <property type="molecule type" value="Genomic_RNA"/>
</dbReference>
<dbReference type="GO" id="GO:0044423">
    <property type="term" value="C:virion component"/>
    <property type="evidence" value="ECO:0007669"/>
    <property type="project" value="UniProtKB-KW"/>
</dbReference>
<dbReference type="CDD" id="cd21662">
    <property type="entry name" value="embe-CoV_Protein-I_like"/>
    <property type="match status" value="1"/>
</dbReference>
<dbReference type="InterPro" id="IPR004876">
    <property type="entry name" value="Corona_nucI"/>
</dbReference>
<dbReference type="InterPro" id="IPR044311">
    <property type="entry name" value="N2-like_embe-CoV"/>
</dbReference>
<dbReference type="Pfam" id="PF03187">
    <property type="entry name" value="Corona_I"/>
    <property type="match status" value="1"/>
</dbReference>